<keyword id="KW-0066">ATP synthesis</keyword>
<keyword id="KW-0997">Cell inner membrane</keyword>
<keyword id="KW-1003">Cell membrane</keyword>
<keyword id="KW-0138">CF(0)</keyword>
<keyword id="KW-0375">Hydrogen ion transport</keyword>
<keyword id="KW-0406">Ion transport</keyword>
<keyword id="KW-0446">Lipid-binding</keyword>
<keyword id="KW-0472">Membrane</keyword>
<keyword id="KW-1185">Reference proteome</keyword>
<keyword id="KW-0812">Transmembrane</keyword>
<keyword id="KW-1133">Transmembrane helix</keyword>
<keyword id="KW-0813">Transport</keyword>
<protein>
    <recommendedName>
        <fullName evidence="1">ATP synthase subunit c</fullName>
    </recommendedName>
    <alternativeName>
        <fullName evidence="1">ATP synthase F(0) sector subunit c</fullName>
    </alternativeName>
    <alternativeName>
        <fullName evidence="1">F-type ATPase subunit c</fullName>
        <shortName evidence="1">F-ATPase subunit c</shortName>
    </alternativeName>
    <alternativeName>
        <fullName evidence="1">Lipid-binding protein</fullName>
    </alternativeName>
</protein>
<sequence>MEHVLGFVALAAGLIIGLGAVGACIGIGIMGSKYLEAAARQPELMNELQTKMFLLAGLIDAAFLIGVGIAMMFAFANPFVLK</sequence>
<gene>
    <name evidence="1" type="primary">atpE</name>
    <name type="ordered locus">Bpro_0322</name>
</gene>
<name>ATPL_POLSJ</name>
<organism>
    <name type="scientific">Polaromonas sp. (strain JS666 / ATCC BAA-500)</name>
    <dbReference type="NCBI Taxonomy" id="296591"/>
    <lineage>
        <taxon>Bacteria</taxon>
        <taxon>Pseudomonadati</taxon>
        <taxon>Pseudomonadota</taxon>
        <taxon>Betaproteobacteria</taxon>
        <taxon>Burkholderiales</taxon>
        <taxon>Comamonadaceae</taxon>
        <taxon>Polaromonas</taxon>
    </lineage>
</organism>
<comment type="function">
    <text evidence="1">F(1)F(0) ATP synthase produces ATP from ADP in the presence of a proton or sodium gradient. F-type ATPases consist of two structural domains, F(1) containing the extramembraneous catalytic core and F(0) containing the membrane proton channel, linked together by a central stalk and a peripheral stalk. During catalysis, ATP synthesis in the catalytic domain of F(1) is coupled via a rotary mechanism of the central stalk subunits to proton translocation.</text>
</comment>
<comment type="function">
    <text evidence="1">Key component of the F(0) channel; it plays a direct role in translocation across the membrane. A homomeric c-ring of between 10-14 subunits forms the central stalk rotor element with the F(1) delta and epsilon subunits.</text>
</comment>
<comment type="subunit">
    <text evidence="1">F-type ATPases have 2 components, F(1) - the catalytic core - and F(0) - the membrane proton channel. F(1) has five subunits: alpha(3), beta(3), gamma(1), delta(1), epsilon(1). F(0) has three main subunits: a(1), b(2) and c(10-14). The alpha and beta chains form an alternating ring which encloses part of the gamma chain. F(1) is attached to F(0) by a central stalk formed by the gamma and epsilon chains, while a peripheral stalk is formed by the delta and b chains.</text>
</comment>
<comment type="subcellular location">
    <subcellularLocation>
        <location evidence="1">Cell inner membrane</location>
        <topology evidence="1">Multi-pass membrane protein</topology>
    </subcellularLocation>
</comment>
<comment type="similarity">
    <text evidence="1">Belongs to the ATPase C chain family.</text>
</comment>
<evidence type="ECO:0000255" key="1">
    <source>
        <dbReference type="HAMAP-Rule" id="MF_01396"/>
    </source>
</evidence>
<feature type="chain" id="PRO_1000184433" description="ATP synthase subunit c">
    <location>
        <begin position="1"/>
        <end position="82"/>
    </location>
</feature>
<feature type="transmembrane region" description="Helical" evidence="1">
    <location>
        <begin position="7"/>
        <end position="27"/>
    </location>
</feature>
<feature type="transmembrane region" description="Helical" evidence="1">
    <location>
        <begin position="53"/>
        <end position="73"/>
    </location>
</feature>
<feature type="site" description="Reversibly protonated during proton transport" evidence="1">
    <location>
        <position position="60"/>
    </location>
</feature>
<reference key="1">
    <citation type="journal article" date="2008" name="Appl. Environ. Microbiol.">
        <title>The genome of Polaromonas sp. strain JS666: insights into the evolution of a hydrocarbon- and xenobiotic-degrading bacterium, and features of relevance to biotechnology.</title>
        <authorList>
            <person name="Mattes T.E."/>
            <person name="Alexander A.K."/>
            <person name="Richardson P.M."/>
            <person name="Munk A.C."/>
            <person name="Han C.S."/>
            <person name="Stothard P."/>
            <person name="Coleman N.V."/>
        </authorList>
    </citation>
    <scope>NUCLEOTIDE SEQUENCE [LARGE SCALE GENOMIC DNA]</scope>
    <source>
        <strain>JS666 / ATCC BAA-500</strain>
    </source>
</reference>
<proteinExistence type="inferred from homology"/>
<accession>Q12GQ5</accession>
<dbReference type="EMBL" id="CP000316">
    <property type="protein sequence ID" value="ABE42287.1"/>
    <property type="molecule type" value="Genomic_DNA"/>
</dbReference>
<dbReference type="RefSeq" id="WP_011481294.1">
    <property type="nucleotide sequence ID" value="NC_007948.1"/>
</dbReference>
<dbReference type="SMR" id="Q12GQ5"/>
<dbReference type="STRING" id="296591.Bpro_0322"/>
<dbReference type="KEGG" id="pol:Bpro_0322"/>
<dbReference type="eggNOG" id="ENOG5032S3K">
    <property type="taxonomic scope" value="Bacteria"/>
</dbReference>
<dbReference type="HOGENOM" id="CLU_148047_1_0_4"/>
<dbReference type="OrthoDB" id="9811659at2"/>
<dbReference type="Proteomes" id="UP000001983">
    <property type="component" value="Chromosome"/>
</dbReference>
<dbReference type="GO" id="GO:0005886">
    <property type="term" value="C:plasma membrane"/>
    <property type="evidence" value="ECO:0007669"/>
    <property type="project" value="UniProtKB-SubCell"/>
</dbReference>
<dbReference type="GO" id="GO:0045259">
    <property type="term" value="C:proton-transporting ATP synthase complex"/>
    <property type="evidence" value="ECO:0007669"/>
    <property type="project" value="UniProtKB-KW"/>
</dbReference>
<dbReference type="GO" id="GO:0033177">
    <property type="term" value="C:proton-transporting two-sector ATPase complex, proton-transporting domain"/>
    <property type="evidence" value="ECO:0007669"/>
    <property type="project" value="InterPro"/>
</dbReference>
<dbReference type="GO" id="GO:0008289">
    <property type="term" value="F:lipid binding"/>
    <property type="evidence" value="ECO:0007669"/>
    <property type="project" value="UniProtKB-KW"/>
</dbReference>
<dbReference type="GO" id="GO:0046933">
    <property type="term" value="F:proton-transporting ATP synthase activity, rotational mechanism"/>
    <property type="evidence" value="ECO:0007669"/>
    <property type="project" value="UniProtKB-UniRule"/>
</dbReference>
<dbReference type="CDD" id="cd18185">
    <property type="entry name" value="ATP-synt_Fo_c_ATPE"/>
    <property type="match status" value="1"/>
</dbReference>
<dbReference type="FunFam" id="1.20.20.10:FF:000002">
    <property type="entry name" value="ATP synthase subunit c"/>
    <property type="match status" value="1"/>
</dbReference>
<dbReference type="Gene3D" id="1.20.20.10">
    <property type="entry name" value="F1F0 ATP synthase subunit C"/>
    <property type="match status" value="1"/>
</dbReference>
<dbReference type="HAMAP" id="MF_01396">
    <property type="entry name" value="ATP_synth_c_bact"/>
    <property type="match status" value="1"/>
</dbReference>
<dbReference type="InterPro" id="IPR005953">
    <property type="entry name" value="ATP_synth_csu_bac/chlpt"/>
</dbReference>
<dbReference type="InterPro" id="IPR000454">
    <property type="entry name" value="ATP_synth_F0_csu"/>
</dbReference>
<dbReference type="InterPro" id="IPR020537">
    <property type="entry name" value="ATP_synth_F0_csu_DDCD_BS"/>
</dbReference>
<dbReference type="InterPro" id="IPR038662">
    <property type="entry name" value="ATP_synth_F0_csu_sf"/>
</dbReference>
<dbReference type="InterPro" id="IPR002379">
    <property type="entry name" value="ATPase_proteolipid_c-like_dom"/>
</dbReference>
<dbReference type="InterPro" id="IPR035921">
    <property type="entry name" value="F/V-ATP_Csub_sf"/>
</dbReference>
<dbReference type="NCBIfam" id="TIGR01260">
    <property type="entry name" value="ATP_synt_c"/>
    <property type="match status" value="1"/>
</dbReference>
<dbReference type="NCBIfam" id="NF005363">
    <property type="entry name" value="PRK06876.1"/>
    <property type="match status" value="1"/>
</dbReference>
<dbReference type="Pfam" id="PF00137">
    <property type="entry name" value="ATP-synt_C"/>
    <property type="match status" value="1"/>
</dbReference>
<dbReference type="PRINTS" id="PR00124">
    <property type="entry name" value="ATPASEC"/>
</dbReference>
<dbReference type="SUPFAM" id="SSF81333">
    <property type="entry name" value="F1F0 ATP synthase subunit C"/>
    <property type="match status" value="1"/>
</dbReference>
<dbReference type="PROSITE" id="PS00605">
    <property type="entry name" value="ATPASE_C"/>
    <property type="match status" value="1"/>
</dbReference>